<gene>
    <name type="primary">sec61al1</name>
    <name type="synonym">sec61a</name>
    <name type="synonym">sec61aa</name>
</gene>
<comment type="function">
    <text evidence="3 5">Component of SEC61 channel-forming translocon complex that mediates transport of signal peptide-containing precursor polypeptides across the endoplasmic reticulum (ER) (By similarity). Forms a ribosome receptor and a gated pore in the ER membrane, both functions required for cotranslational translocation of nascent polypeptides (By similarity). May cooperate with auxiliary protein SEC62, SEC63 and HSPA5/BiP to enable post-translational transport of small presecretory proteins (By similarity). The SEC61 channel is also involved in ER membrane insertion of transmembrane proteins: it mediates membrane insertion of the first few transmembrane segments of proteins, while insertion of subsequent transmembrane regions of multi-pass membrane proteins is mediated by the multi-pass translocon (MPT) complex (By similarity). Plays a role in the pronephric kidney tubule development (PubMed:27392076).</text>
</comment>
<comment type="subunit">
    <text evidence="2 3">The SEC61 channel-forming translocon complex consists of channel-forming core components SEC61A1, SEC61B and SEC61G and different auxiliary components such as SEC62 and SEC63 (By similarity). The SEC61 channel associates with the multi-pass translocon (MPT) complex (By similarity).</text>
</comment>
<comment type="subcellular location">
    <subcellularLocation>
        <location evidence="3">Endoplasmic reticulum membrane</location>
        <topology evidence="3">Multi-pass membrane protein</topology>
    </subcellularLocation>
</comment>
<comment type="similarity">
    <text evidence="6">Belongs to the SecY/SEC61-alpha family.</text>
</comment>
<proteinExistence type="evidence at transcript level"/>
<sequence length="476" mass="52298">MAIKFLEVIKPFCAVLPEIQKPERKIQFREKVLWTAITLFIFLVCCQIPLFGIMSSDSADPFYWMRVILASNRGTLMELGISPIVTSGLIMQLLAGAKIIEVGDTPKDRALFNGAQKLFGMIITIGQAIVYVMTGMYGDPSEMGAGICLLIIIQLFVAGLIVLLLDELLQKGYGLGSGISLFIATNICETIVWKAFSPTTVNTGRGTEFEGAIIALFHLLATRTDKVRALREAFYRQNLPNLMNLIATVFVFAVVIYFQGFRVDLPIKSARYRGQYNTYPIKLFYTSNIPIILQSALVSNLYVISQMLSTRFSGNFLVNLLGTWSDTSSGGPARAYPVGGLCYYLSPPESFGSVLDDPVHAVIYIVFMLGSCAFFSKTWIEVSGSSAKDVAKQLKEQQMVMRGHRETSMVHELNRYIPTAAAFGGLCIGGLSVMADFLGAIGSGTGILLAVTIIYQYFEIFVKEQSEVGSMGALLF</sequence>
<evidence type="ECO:0000250" key="1"/>
<evidence type="ECO:0000250" key="2">
    <source>
        <dbReference type="UniProtKB" id="P38377"/>
    </source>
</evidence>
<evidence type="ECO:0000250" key="3">
    <source>
        <dbReference type="UniProtKB" id="P61619"/>
    </source>
</evidence>
<evidence type="ECO:0000255" key="4"/>
<evidence type="ECO:0000269" key="5">
    <source>
    </source>
</evidence>
<evidence type="ECO:0000305" key="6"/>
<feature type="initiator methionine" description="Removed" evidence="1">
    <location>
        <position position="1"/>
    </location>
</feature>
<feature type="chain" id="PRO_0000131797" description="Protein transport protein Sec61 subunit alpha-like 1">
    <location>
        <begin position="2"/>
        <end position="476"/>
    </location>
</feature>
<feature type="topological domain" description="Cytoplasmic" evidence="4">
    <location>
        <begin position="2"/>
        <end position="33"/>
    </location>
</feature>
<feature type="transmembrane region" description="Helical" evidence="4">
    <location>
        <begin position="34"/>
        <end position="53"/>
    </location>
</feature>
<feature type="topological domain" description="Lumenal" evidence="4">
    <location>
        <begin position="54"/>
        <end position="76"/>
    </location>
</feature>
<feature type="transmembrane region" description="Helical" evidence="4">
    <location>
        <begin position="77"/>
        <end position="96"/>
    </location>
</feature>
<feature type="topological domain" description="Cytoplasmic" evidence="4">
    <location>
        <begin position="97"/>
        <end position="117"/>
    </location>
</feature>
<feature type="transmembrane region" description="Helical" evidence="4">
    <location>
        <begin position="118"/>
        <end position="138"/>
    </location>
</feature>
<feature type="topological domain" description="Lumenal" evidence="4">
    <location>
        <begin position="139"/>
        <end position="144"/>
    </location>
</feature>
<feature type="transmembrane region" description="Helical" evidence="4">
    <location>
        <begin position="145"/>
        <end position="165"/>
    </location>
</feature>
<feature type="topological domain" description="Cytoplasmic" evidence="4">
    <location>
        <begin position="166"/>
        <end position="172"/>
    </location>
</feature>
<feature type="transmembrane region" description="Helical" evidence="4">
    <location>
        <begin position="173"/>
        <end position="193"/>
    </location>
</feature>
<feature type="topological domain" description="Lumenal" evidence="4">
    <location>
        <begin position="194"/>
        <end position="240"/>
    </location>
</feature>
<feature type="transmembrane region" description="Helical" evidence="4">
    <location>
        <begin position="241"/>
        <end position="261"/>
    </location>
</feature>
<feature type="topological domain" description="Cytoplasmic" evidence="4">
    <location>
        <begin position="262"/>
        <end position="288"/>
    </location>
</feature>
<feature type="transmembrane region" description="Helical" evidence="4">
    <location>
        <begin position="289"/>
        <end position="309"/>
    </location>
</feature>
<feature type="topological domain" description="Lumenal" evidence="4">
    <location>
        <begin position="310"/>
        <end position="354"/>
    </location>
</feature>
<feature type="transmembrane region" description="Helical" evidence="4">
    <location>
        <begin position="355"/>
        <end position="375"/>
    </location>
</feature>
<feature type="topological domain" description="Cytoplasmic" evidence="4">
    <location>
        <begin position="376"/>
        <end position="420"/>
    </location>
</feature>
<feature type="transmembrane region" description="Helical" evidence="4">
    <location>
        <begin position="421"/>
        <end position="441"/>
    </location>
</feature>
<feature type="topological domain" description="Lumenal" evidence="4">
    <location>
        <begin position="442"/>
        <end position="445"/>
    </location>
</feature>
<feature type="transmembrane region" description="Helical" evidence="4">
    <location>
        <begin position="446"/>
        <end position="462"/>
    </location>
</feature>
<feature type="topological domain" description="Cytoplasmic" evidence="4">
    <location>
        <begin position="463"/>
        <end position="476"/>
    </location>
</feature>
<feature type="sequence conflict" description="In Ref. 1; AAK40295." evidence="6" ref="1">
    <original>F</original>
    <variation>S</variation>
    <location>
        <position position="312"/>
    </location>
</feature>
<protein>
    <recommendedName>
        <fullName>Protein transport protein Sec61 subunit alpha-like 1</fullName>
    </recommendedName>
</protein>
<accession>Q90ZM2</accession>
<accession>Q7ZU31</accession>
<reference key="1">
    <citation type="submission" date="2001-04" db="EMBL/GenBank/DDBJ databases">
        <authorList>
            <person name="Hartmann E."/>
        </authorList>
    </citation>
    <scope>NUCLEOTIDE SEQUENCE [MRNA]</scope>
</reference>
<reference key="2">
    <citation type="submission" date="2003-01" db="EMBL/GenBank/DDBJ databases">
        <authorList>
            <consortium name="NIH - Zebrafish Gene Collection (ZGC) project"/>
        </authorList>
    </citation>
    <scope>NUCLEOTIDE SEQUENCE [LARGE SCALE MRNA]</scope>
    <source>
        <strain>AB</strain>
        <tissue>Kidney</tissue>
    </source>
</reference>
<reference key="3">
    <citation type="journal article" date="2016" name="Am. J. Hum. Genet.">
        <title>Heterozygous loss-of-function SEC61A1 mutations cause autosomal-dominant tubulo-interstitial and glomerulocystic kidney disease with anemia.</title>
        <authorList>
            <person name="Bolar N.A."/>
            <person name="Golzio C."/>
            <person name="Zivna M."/>
            <person name="Hayot G."/>
            <person name="Van Hemelrijk C."/>
            <person name="Schepers D."/>
            <person name="Vandeweyer G."/>
            <person name="Hoischen A."/>
            <person name="Huyghe J.R."/>
            <person name="Raes A."/>
            <person name="Matthys E."/>
            <person name="Sys E."/>
            <person name="Azou M."/>
            <person name="Gubler M.C."/>
            <person name="Praet M."/>
            <person name="Van Camp G."/>
            <person name="McFadden K."/>
            <person name="Pediaditakis I."/>
            <person name="Pristoupilova A."/>
            <person name="Hodanova K."/>
            <person name="Vyletal P."/>
            <person name="Hartmannova H."/>
            <person name="Stranecky V."/>
            <person name="Hulkova H."/>
            <person name="Baresova V."/>
            <person name="Jedlickova I."/>
            <person name="Sovova J."/>
            <person name="Hnizda A."/>
            <person name="Kidd K."/>
            <person name="Bleyer A.J."/>
            <person name="Spong R.S."/>
            <person name="Vande Walle J."/>
            <person name="Mortier G."/>
            <person name="Brunner H."/>
            <person name="Van Laer L."/>
            <person name="Kmoch S."/>
            <person name="Katsanis N."/>
            <person name="Loeys B.L."/>
        </authorList>
    </citation>
    <scope>FUNCTION</scope>
</reference>
<organism>
    <name type="scientific">Danio rerio</name>
    <name type="common">Zebrafish</name>
    <name type="synonym">Brachydanio rerio</name>
    <dbReference type="NCBI Taxonomy" id="7955"/>
    <lineage>
        <taxon>Eukaryota</taxon>
        <taxon>Metazoa</taxon>
        <taxon>Chordata</taxon>
        <taxon>Craniata</taxon>
        <taxon>Vertebrata</taxon>
        <taxon>Euteleostomi</taxon>
        <taxon>Actinopterygii</taxon>
        <taxon>Neopterygii</taxon>
        <taxon>Teleostei</taxon>
        <taxon>Ostariophysi</taxon>
        <taxon>Cypriniformes</taxon>
        <taxon>Danionidae</taxon>
        <taxon>Danioninae</taxon>
        <taxon>Danio</taxon>
    </lineage>
</organism>
<name>S61A1_DANRE</name>
<dbReference type="EMBL" id="AY029527">
    <property type="protein sequence ID" value="AAK40295.1"/>
    <property type="molecule type" value="mRNA"/>
</dbReference>
<dbReference type="EMBL" id="BC044351">
    <property type="protein sequence ID" value="AAH44351.1"/>
    <property type="molecule type" value="mRNA"/>
</dbReference>
<dbReference type="EMBL" id="BC066715">
    <property type="protein sequence ID" value="AAH66715.1"/>
    <property type="molecule type" value="mRNA"/>
</dbReference>
<dbReference type="RefSeq" id="NP_705945.1">
    <property type="nucleotide sequence ID" value="NM_153659.1"/>
</dbReference>
<dbReference type="SMR" id="Q90ZM2"/>
<dbReference type="FunCoup" id="Q90ZM2">
    <property type="interactions" value="1863"/>
</dbReference>
<dbReference type="STRING" id="7955.ENSDARP00000033318"/>
<dbReference type="PaxDb" id="7955-ENSDARP00000033318"/>
<dbReference type="Ensembl" id="ENSDART00000034730">
    <property type="protein sequence ID" value="ENSDARP00000033318"/>
    <property type="gene ID" value="ENSDARG00000021669"/>
</dbReference>
<dbReference type="GeneID" id="192298"/>
<dbReference type="KEGG" id="dre:192298"/>
<dbReference type="AGR" id="ZFIN:ZDB-GENE-020418-2"/>
<dbReference type="CTD" id="192298"/>
<dbReference type="ZFIN" id="ZDB-GENE-020418-2">
    <property type="gene designation" value="sec61a1a"/>
</dbReference>
<dbReference type="eggNOG" id="KOG1373">
    <property type="taxonomic scope" value="Eukaryota"/>
</dbReference>
<dbReference type="HOGENOM" id="CLU_031763_2_0_1"/>
<dbReference type="InParanoid" id="Q90ZM2"/>
<dbReference type="OMA" id="PMMRQMF"/>
<dbReference type="OrthoDB" id="420669at2759"/>
<dbReference type="PhylomeDB" id="Q90ZM2"/>
<dbReference type="TreeFam" id="TF300348"/>
<dbReference type="PRO" id="PR:Q90ZM2"/>
<dbReference type="Proteomes" id="UP000000437">
    <property type="component" value="Chromosome 6"/>
</dbReference>
<dbReference type="Bgee" id="ENSDARG00000021669">
    <property type="expression patterns" value="Expressed in intestine and 41 other cell types or tissues"/>
</dbReference>
<dbReference type="GO" id="GO:0005789">
    <property type="term" value="C:endoplasmic reticulum membrane"/>
    <property type="evidence" value="ECO:0000250"/>
    <property type="project" value="UniProtKB"/>
</dbReference>
<dbReference type="GO" id="GO:0005784">
    <property type="term" value="C:Sec61 translocon complex"/>
    <property type="evidence" value="ECO:0000318"/>
    <property type="project" value="GO_Central"/>
</dbReference>
<dbReference type="GO" id="GO:0008320">
    <property type="term" value="F:protein transmembrane transporter activity"/>
    <property type="evidence" value="ECO:0000318"/>
    <property type="project" value="GO_Central"/>
</dbReference>
<dbReference type="GO" id="GO:0043022">
    <property type="term" value="F:ribosome binding"/>
    <property type="evidence" value="ECO:0000250"/>
    <property type="project" value="UniProtKB"/>
</dbReference>
<dbReference type="GO" id="GO:0005048">
    <property type="term" value="F:signal sequence binding"/>
    <property type="evidence" value="ECO:0000318"/>
    <property type="project" value="GO_Central"/>
</dbReference>
<dbReference type="GO" id="GO:0006613">
    <property type="term" value="P:cotranslational protein targeting to membrane"/>
    <property type="evidence" value="ECO:0000250"/>
    <property type="project" value="UniProtKB"/>
</dbReference>
<dbReference type="GO" id="GO:0021986">
    <property type="term" value="P:habenula development"/>
    <property type="evidence" value="ECO:0000315"/>
    <property type="project" value="ZFIN"/>
</dbReference>
<dbReference type="GO" id="GO:0031204">
    <property type="term" value="P:post-translational protein targeting to membrane, translocation"/>
    <property type="evidence" value="ECO:0000318"/>
    <property type="project" value="GO_Central"/>
</dbReference>
<dbReference type="GO" id="GO:0039019">
    <property type="term" value="P:pronephric nephron development"/>
    <property type="evidence" value="ECO:0000315"/>
    <property type="project" value="UniProtKB"/>
</dbReference>
<dbReference type="GO" id="GO:0045048">
    <property type="term" value="P:protein insertion into ER membrane"/>
    <property type="evidence" value="ECO:0000250"/>
    <property type="project" value="UniProtKB"/>
</dbReference>
<dbReference type="GO" id="GO:0006616">
    <property type="term" value="P:SRP-dependent cotranslational protein targeting to membrane, translocation"/>
    <property type="evidence" value="ECO:0000318"/>
    <property type="project" value="GO_Central"/>
</dbReference>
<dbReference type="FunFam" id="1.10.3370.10:FF:000002">
    <property type="entry name" value="Transport Sec61 subunit alpha isoform 2"/>
    <property type="match status" value="1"/>
</dbReference>
<dbReference type="Gene3D" id="1.10.3370.10">
    <property type="entry name" value="SecY subunit domain"/>
    <property type="match status" value="1"/>
</dbReference>
<dbReference type="InterPro" id="IPR002208">
    <property type="entry name" value="SecY/SEC61-alpha"/>
</dbReference>
<dbReference type="InterPro" id="IPR030659">
    <property type="entry name" value="SecY_CS"/>
</dbReference>
<dbReference type="InterPro" id="IPR023201">
    <property type="entry name" value="SecY_dom_sf"/>
</dbReference>
<dbReference type="InterPro" id="IPR019561">
    <property type="entry name" value="Translocon_Sec61/SecY_plug_dom"/>
</dbReference>
<dbReference type="NCBIfam" id="TIGR00967">
    <property type="entry name" value="3a0501s007"/>
    <property type="match status" value="1"/>
</dbReference>
<dbReference type="NCBIfam" id="NF006341">
    <property type="entry name" value="PRK08568.1-5"/>
    <property type="match status" value="1"/>
</dbReference>
<dbReference type="PANTHER" id="PTHR10906">
    <property type="entry name" value="SECY/SEC61-ALPHA FAMILY MEMBER"/>
    <property type="match status" value="1"/>
</dbReference>
<dbReference type="Pfam" id="PF10559">
    <property type="entry name" value="Plug_translocon"/>
    <property type="match status" value="1"/>
</dbReference>
<dbReference type="Pfam" id="PF00344">
    <property type="entry name" value="SecY"/>
    <property type="match status" value="1"/>
</dbReference>
<dbReference type="PIRSF" id="PIRSF004557">
    <property type="entry name" value="SecY"/>
    <property type="match status" value="1"/>
</dbReference>
<dbReference type="SUPFAM" id="SSF103491">
    <property type="entry name" value="Preprotein translocase SecY subunit"/>
    <property type="match status" value="1"/>
</dbReference>
<dbReference type="PROSITE" id="PS00755">
    <property type="entry name" value="SECY_1"/>
    <property type="match status" value="1"/>
</dbReference>
<dbReference type="PROSITE" id="PS00756">
    <property type="entry name" value="SECY_2"/>
    <property type="match status" value="1"/>
</dbReference>
<keyword id="KW-0217">Developmental protein</keyword>
<keyword id="KW-0256">Endoplasmic reticulum</keyword>
<keyword id="KW-0472">Membrane</keyword>
<keyword id="KW-0653">Protein transport</keyword>
<keyword id="KW-1185">Reference proteome</keyword>
<keyword id="KW-0811">Translocation</keyword>
<keyword id="KW-0812">Transmembrane</keyword>
<keyword id="KW-1133">Transmembrane helix</keyword>
<keyword id="KW-0813">Transport</keyword>